<organism evidence="3">
    <name type="scientific">Cheiracanthium punctorium</name>
    <name type="common">Yellow sac spider</name>
    <name type="synonym">Aranea punctoria</name>
    <dbReference type="NCBI Taxonomy" id="682790"/>
    <lineage>
        <taxon>Eukaryota</taxon>
        <taxon>Metazoa</taxon>
        <taxon>Ecdysozoa</taxon>
        <taxon>Arthropoda</taxon>
        <taxon>Chelicerata</taxon>
        <taxon>Arachnida</taxon>
        <taxon>Araneae</taxon>
        <taxon>Araneomorphae</taxon>
        <taxon>Entelegynae</taxon>
        <taxon>Entelegynae incertae sedis</taxon>
        <taxon>Cheiracanthiidae</taxon>
        <taxon>Cheiracanthium</taxon>
    </lineage>
</organism>
<feature type="chain" id="PRO_0000440160" description="Toxin CpTx-4a" evidence="2">
    <location>
        <begin position="1"/>
        <end position="20" status="greater than"/>
    </location>
</feature>
<feature type="non-terminal residue" evidence="3">
    <location>
        <position position="20"/>
    </location>
</feature>
<name>TX4A_CHEPU</name>
<proteinExistence type="evidence at protein level"/>
<evidence type="ECO:0000250" key="1">
    <source>
        <dbReference type="UniProtKB" id="C0HKG7"/>
    </source>
</evidence>
<evidence type="ECO:0000269" key="2">
    <source>
    </source>
</evidence>
<evidence type="ECO:0000303" key="3">
    <source>
    </source>
</evidence>
<evidence type="ECO:0000305" key="4"/>
<evidence type="ECO:0000305" key="5">
    <source>
    </source>
</evidence>
<accession>C0HKG4</accession>
<reference evidence="4" key="1">
    <citation type="journal article" date="2014" name="Insect Mol. Biol.">
        <title>Structure of the yellow sac spider Cheiracanthium punctorium genes provides clues to evolution of insecticidal two-domain knottin toxins.</title>
        <authorList>
            <person name="Sachkova M.Y."/>
            <person name="Slavokhotova A.A."/>
            <person name="Grishin E.V."/>
            <person name="Vassilevski A.A."/>
        </authorList>
    </citation>
    <scope>PROTEIN SEQUENCE</scope>
    <scope>FUNCTION</scope>
    <scope>SUBCELLULAR LOCATION</scope>
    <scope>MASS SPECTROMETRY</scope>
    <scope>IDENTIFICATION BY MASS SPECTROMETRY</scope>
    <scope>TOXIC DOSE</scope>
    <source>
        <tissue evidence="3">Venom</tissue>
    </source>
</reference>
<comment type="function">
    <text evidence="1 2">Spider venom toxin that exhibits cytolytic activity by forming an alpha-helix across the membrane (By similarity). Lethal to insect larvae (PubMed:24717175).</text>
</comment>
<comment type="subcellular location">
    <subcellularLocation>
        <location evidence="2">Secreted</location>
    </subcellularLocation>
</comment>
<comment type="tissue specificity">
    <text evidence="5">Expressed by the venom gland.</text>
</comment>
<comment type="mass spectrometry" mass="15080.0" method="MALDI" evidence="2"/>
<comment type="toxic dose">
    <text evidence="2">LD(50) is 33-50 ug/g in S.carnaria larvae.</text>
</comment>
<comment type="toxic dose">
    <text evidence="2">PD(50) is 25-33 ug/g in S.carnaria larvae.</text>
</comment>
<comment type="similarity">
    <text evidence="4">Belongs to the spider toxin CSTX family.</text>
</comment>
<protein>
    <recommendedName>
        <fullName evidence="3">Toxin CpTx-4a</fullName>
    </recommendedName>
</protein>
<dbReference type="GO" id="GO:0005576">
    <property type="term" value="C:extracellular region"/>
    <property type="evidence" value="ECO:0007669"/>
    <property type="project" value="UniProtKB-SubCell"/>
</dbReference>
<dbReference type="GO" id="GO:0090729">
    <property type="term" value="F:toxin activity"/>
    <property type="evidence" value="ECO:0007669"/>
    <property type="project" value="UniProtKB-KW"/>
</dbReference>
<keyword id="KW-0903">Direct protein sequencing</keyword>
<keyword id="KW-0964">Secreted</keyword>
<keyword id="KW-0800">Toxin</keyword>
<sequence length="20" mass="2294">ASCTERKHDCTKDRHSCCRG</sequence>